<feature type="chain" id="PRO_0000156644" description="Homoserine kinase">
    <location>
        <begin position="1"/>
        <end position="294"/>
    </location>
</feature>
<feature type="binding site" evidence="1">
    <location>
        <begin position="83"/>
        <end position="93"/>
    </location>
    <ligand>
        <name>ATP</name>
        <dbReference type="ChEBI" id="CHEBI:30616"/>
    </ligand>
</feature>
<sequence length="294" mass="31640">MKKRIYAPATIANFGPGFDVFGMAIEEPGDEVIVKESDSFEIEVEGYDVPRDENNVAVISAKALFKMVGEEGGVKIRLKKGVRPKSGLGSSGASSVAGALAAARVLGVDNDELIIMAALEGEKAASGSPHGDNVIPSYYGGFNILESLNPLRVHRVDVELNVVVVLPEVEVPTKEARRIVPEKVPLKDAIKNLAMASSLVLALKEGDIETVGRLLDDNLALPYRKKLMPWFDEVRKAGLEAGAYGVTVSGSGPSLFAIGENLKDIGKAMKEKFEELGIRAEFWITKTGRGAKWY</sequence>
<reference key="1">
    <citation type="journal article" date="2003" name="Mol. Microbiol.">
        <title>An integrated analysis of the genome of the hyperthermophilic archaeon Pyrococcus abyssi.</title>
        <authorList>
            <person name="Cohen G.N."/>
            <person name="Barbe V."/>
            <person name="Flament D."/>
            <person name="Galperin M."/>
            <person name="Heilig R."/>
            <person name="Lecompte O."/>
            <person name="Poch O."/>
            <person name="Prieur D."/>
            <person name="Querellou J."/>
            <person name="Ripp R."/>
            <person name="Thierry J.-C."/>
            <person name="Van der Oost J."/>
            <person name="Weissenbach J."/>
            <person name="Zivanovic Y."/>
            <person name="Forterre P."/>
        </authorList>
    </citation>
    <scope>NUCLEOTIDE SEQUENCE [LARGE SCALE GENOMIC DNA]</scope>
    <source>
        <strain>GE5 / Orsay</strain>
    </source>
</reference>
<reference key="2">
    <citation type="journal article" date="2012" name="Curr. Microbiol.">
        <title>Re-annotation of two hyperthermophilic archaea Pyrococcus abyssi GE5 and Pyrococcus furiosus DSM 3638.</title>
        <authorList>
            <person name="Gao J."/>
            <person name="Wang J."/>
        </authorList>
    </citation>
    <scope>GENOME REANNOTATION</scope>
    <source>
        <strain>GE5 / Orsay</strain>
    </source>
</reference>
<keyword id="KW-0028">Amino-acid biosynthesis</keyword>
<keyword id="KW-0067">ATP-binding</keyword>
<keyword id="KW-0963">Cytoplasm</keyword>
<keyword id="KW-0418">Kinase</keyword>
<keyword id="KW-0547">Nucleotide-binding</keyword>
<keyword id="KW-0791">Threonine biosynthesis</keyword>
<keyword id="KW-0808">Transferase</keyword>
<dbReference type="EC" id="2.7.1.39" evidence="1"/>
<dbReference type="EMBL" id="AJ248286">
    <property type="protein sequence ID" value="CAB49949.1"/>
    <property type="molecule type" value="Genomic_DNA"/>
</dbReference>
<dbReference type="EMBL" id="HE613800">
    <property type="protein sequence ID" value="CCE70448.1"/>
    <property type="molecule type" value="Genomic_DNA"/>
</dbReference>
<dbReference type="PIR" id="H75080">
    <property type="entry name" value="H75080"/>
</dbReference>
<dbReference type="RefSeq" id="WP_010868156.1">
    <property type="nucleotide sequence ID" value="NC_000868.1"/>
</dbReference>
<dbReference type="SMR" id="Q9UZV7"/>
<dbReference type="STRING" id="272844.PAB1676"/>
<dbReference type="KEGG" id="pab:PAB1676"/>
<dbReference type="PATRIC" id="fig|272844.11.peg.1091"/>
<dbReference type="eggNOG" id="arCOG01027">
    <property type="taxonomic scope" value="Archaea"/>
</dbReference>
<dbReference type="HOGENOM" id="CLU_041243_1_1_2"/>
<dbReference type="OrthoDB" id="28273at2157"/>
<dbReference type="PhylomeDB" id="Q9UZV7"/>
<dbReference type="UniPathway" id="UPA00050">
    <property type="reaction ID" value="UER00064"/>
</dbReference>
<dbReference type="Proteomes" id="UP000000810">
    <property type="component" value="Chromosome"/>
</dbReference>
<dbReference type="Proteomes" id="UP000009139">
    <property type="component" value="Chromosome"/>
</dbReference>
<dbReference type="GO" id="GO:0005737">
    <property type="term" value="C:cytoplasm"/>
    <property type="evidence" value="ECO:0007669"/>
    <property type="project" value="UniProtKB-SubCell"/>
</dbReference>
<dbReference type="GO" id="GO:0005524">
    <property type="term" value="F:ATP binding"/>
    <property type="evidence" value="ECO:0007669"/>
    <property type="project" value="UniProtKB-UniRule"/>
</dbReference>
<dbReference type="GO" id="GO:0004413">
    <property type="term" value="F:homoserine kinase activity"/>
    <property type="evidence" value="ECO:0007669"/>
    <property type="project" value="UniProtKB-UniRule"/>
</dbReference>
<dbReference type="GO" id="GO:0009088">
    <property type="term" value="P:threonine biosynthetic process"/>
    <property type="evidence" value="ECO:0007669"/>
    <property type="project" value="UniProtKB-UniRule"/>
</dbReference>
<dbReference type="Gene3D" id="3.30.230.10">
    <property type="match status" value="1"/>
</dbReference>
<dbReference type="Gene3D" id="3.30.70.890">
    <property type="entry name" value="GHMP kinase, C-terminal domain"/>
    <property type="match status" value="1"/>
</dbReference>
<dbReference type="HAMAP" id="MF_00384">
    <property type="entry name" value="Homoser_kinase"/>
    <property type="match status" value="1"/>
</dbReference>
<dbReference type="InterPro" id="IPR013750">
    <property type="entry name" value="GHMP_kinase_C_dom"/>
</dbReference>
<dbReference type="InterPro" id="IPR036554">
    <property type="entry name" value="GHMP_kinase_C_sf"/>
</dbReference>
<dbReference type="InterPro" id="IPR006204">
    <property type="entry name" value="GHMP_kinase_N_dom"/>
</dbReference>
<dbReference type="InterPro" id="IPR000870">
    <property type="entry name" value="Homoserine_kinase"/>
</dbReference>
<dbReference type="InterPro" id="IPR020568">
    <property type="entry name" value="Ribosomal_Su5_D2-typ_SF"/>
</dbReference>
<dbReference type="InterPro" id="IPR014721">
    <property type="entry name" value="Ribsml_uS5_D2-typ_fold_subgr"/>
</dbReference>
<dbReference type="NCBIfam" id="NF002288">
    <property type="entry name" value="PRK01212.1-4"/>
    <property type="match status" value="1"/>
</dbReference>
<dbReference type="NCBIfam" id="TIGR00191">
    <property type="entry name" value="thrB"/>
    <property type="match status" value="1"/>
</dbReference>
<dbReference type="PANTHER" id="PTHR20861:SF1">
    <property type="entry name" value="HOMOSERINE KINASE"/>
    <property type="match status" value="1"/>
</dbReference>
<dbReference type="PANTHER" id="PTHR20861">
    <property type="entry name" value="HOMOSERINE/4-DIPHOSPHOCYTIDYL-2-C-METHYL-D-ERYTHRITOL KINASE"/>
    <property type="match status" value="1"/>
</dbReference>
<dbReference type="Pfam" id="PF08544">
    <property type="entry name" value="GHMP_kinases_C"/>
    <property type="match status" value="1"/>
</dbReference>
<dbReference type="Pfam" id="PF00288">
    <property type="entry name" value="GHMP_kinases_N"/>
    <property type="match status" value="1"/>
</dbReference>
<dbReference type="PIRSF" id="PIRSF000676">
    <property type="entry name" value="Homoser_kin"/>
    <property type="match status" value="1"/>
</dbReference>
<dbReference type="PRINTS" id="PR00958">
    <property type="entry name" value="HOMSERKINASE"/>
</dbReference>
<dbReference type="SUPFAM" id="SSF55060">
    <property type="entry name" value="GHMP Kinase, C-terminal domain"/>
    <property type="match status" value="1"/>
</dbReference>
<dbReference type="SUPFAM" id="SSF54211">
    <property type="entry name" value="Ribosomal protein S5 domain 2-like"/>
    <property type="match status" value="1"/>
</dbReference>
<evidence type="ECO:0000255" key="1">
    <source>
        <dbReference type="HAMAP-Rule" id="MF_00384"/>
    </source>
</evidence>
<name>KHSE_PYRAB</name>
<accession>Q9UZV7</accession>
<accession>G8ZJI9</accession>
<gene>
    <name evidence="1" type="primary">thrB</name>
    <name type="ordered locus">PYRAB10390</name>
    <name type="ORF">PAB1676</name>
</gene>
<proteinExistence type="inferred from homology"/>
<comment type="function">
    <text evidence="1">Catalyzes the ATP-dependent phosphorylation of L-homoserine to L-homoserine phosphate.</text>
</comment>
<comment type="catalytic activity">
    <reaction evidence="1">
        <text>L-homoserine + ATP = O-phospho-L-homoserine + ADP + H(+)</text>
        <dbReference type="Rhea" id="RHEA:13985"/>
        <dbReference type="ChEBI" id="CHEBI:15378"/>
        <dbReference type="ChEBI" id="CHEBI:30616"/>
        <dbReference type="ChEBI" id="CHEBI:57476"/>
        <dbReference type="ChEBI" id="CHEBI:57590"/>
        <dbReference type="ChEBI" id="CHEBI:456216"/>
        <dbReference type="EC" id="2.7.1.39"/>
    </reaction>
</comment>
<comment type="pathway">
    <text evidence="1">Amino-acid biosynthesis; L-threonine biosynthesis; L-threonine from L-aspartate: step 4/5.</text>
</comment>
<comment type="subcellular location">
    <subcellularLocation>
        <location evidence="1">Cytoplasm</location>
    </subcellularLocation>
</comment>
<comment type="similarity">
    <text evidence="1">Belongs to the GHMP kinase family. Homoserine kinase subfamily.</text>
</comment>
<protein>
    <recommendedName>
        <fullName evidence="1">Homoserine kinase</fullName>
        <shortName evidence="1">HK</shortName>
        <shortName evidence="1">HSK</shortName>
        <ecNumber evidence="1">2.7.1.39</ecNumber>
    </recommendedName>
</protein>
<organism>
    <name type="scientific">Pyrococcus abyssi (strain GE5 / Orsay)</name>
    <dbReference type="NCBI Taxonomy" id="272844"/>
    <lineage>
        <taxon>Archaea</taxon>
        <taxon>Methanobacteriati</taxon>
        <taxon>Methanobacteriota</taxon>
        <taxon>Thermococci</taxon>
        <taxon>Thermococcales</taxon>
        <taxon>Thermococcaceae</taxon>
        <taxon>Pyrococcus</taxon>
    </lineage>
</organism>